<accession>A6WXQ0</accession>
<organism>
    <name type="scientific">Brucella anthropi (strain ATCC 49188 / DSM 6882 / CCUG 24695 / JCM 21032 / LMG 3331 / NBRC 15819 / NCTC 12168 / Alc 37)</name>
    <name type="common">Ochrobactrum anthropi</name>
    <dbReference type="NCBI Taxonomy" id="439375"/>
    <lineage>
        <taxon>Bacteria</taxon>
        <taxon>Pseudomonadati</taxon>
        <taxon>Pseudomonadota</taxon>
        <taxon>Alphaproteobacteria</taxon>
        <taxon>Hyphomicrobiales</taxon>
        <taxon>Brucellaceae</taxon>
        <taxon>Brucella/Ochrobactrum group</taxon>
        <taxon>Brucella</taxon>
    </lineage>
</organism>
<sequence length="248" mass="27362">MTETARTTIDASEIEHFSRIAAEWWNPQGKFRPLHKFNPTRLAYIKEKICAKFNRDPNAPRPFDGLRLLDIGCGGGLLCEPMARLGATVIGADASTTNIEVAKIHAAQSGLDIDYRATTAEALAEAGEKFDVVLNMEVVEHVADVDLFMSATSEMVKPGGLMFVATINRTLKAYGLAIIGAEYVLRWLPRGTHQYEKLVRPEELEAALAKGGLRLIDKLGVTYNPLADSWSRSRDTDVNYMVLAERPA</sequence>
<proteinExistence type="inferred from homology"/>
<evidence type="ECO:0000255" key="1">
    <source>
        <dbReference type="HAMAP-Rule" id="MF_00472"/>
    </source>
</evidence>
<name>UBIG_BRUA4</name>
<protein>
    <recommendedName>
        <fullName evidence="1">Ubiquinone biosynthesis O-methyltransferase</fullName>
    </recommendedName>
    <alternativeName>
        <fullName evidence="1">2-polyprenyl-6-hydroxyphenol methylase</fullName>
        <ecNumber evidence="1">2.1.1.222</ecNumber>
    </alternativeName>
    <alternativeName>
        <fullName evidence="1">3-demethylubiquinone 3-O-methyltransferase</fullName>
        <ecNumber evidence="1">2.1.1.64</ecNumber>
    </alternativeName>
</protein>
<keyword id="KW-0489">Methyltransferase</keyword>
<keyword id="KW-1185">Reference proteome</keyword>
<keyword id="KW-0949">S-adenosyl-L-methionine</keyword>
<keyword id="KW-0808">Transferase</keyword>
<keyword id="KW-0831">Ubiquinone biosynthesis</keyword>
<comment type="function">
    <text evidence="1">O-methyltransferase that catalyzes the 2 O-methylation steps in the ubiquinone biosynthetic pathway.</text>
</comment>
<comment type="catalytic activity">
    <reaction evidence="1">
        <text>a 3-demethylubiquinol + S-adenosyl-L-methionine = a ubiquinol + S-adenosyl-L-homocysteine + H(+)</text>
        <dbReference type="Rhea" id="RHEA:44380"/>
        <dbReference type="Rhea" id="RHEA-COMP:9566"/>
        <dbReference type="Rhea" id="RHEA-COMP:10914"/>
        <dbReference type="ChEBI" id="CHEBI:15378"/>
        <dbReference type="ChEBI" id="CHEBI:17976"/>
        <dbReference type="ChEBI" id="CHEBI:57856"/>
        <dbReference type="ChEBI" id="CHEBI:59789"/>
        <dbReference type="ChEBI" id="CHEBI:84422"/>
        <dbReference type="EC" id="2.1.1.64"/>
    </reaction>
</comment>
<comment type="catalytic activity">
    <reaction evidence="1">
        <text>a 3-(all-trans-polyprenyl)benzene-1,2-diol + S-adenosyl-L-methionine = a 2-methoxy-6-(all-trans-polyprenyl)phenol + S-adenosyl-L-homocysteine + H(+)</text>
        <dbReference type="Rhea" id="RHEA:31411"/>
        <dbReference type="Rhea" id="RHEA-COMP:9550"/>
        <dbReference type="Rhea" id="RHEA-COMP:9551"/>
        <dbReference type="ChEBI" id="CHEBI:15378"/>
        <dbReference type="ChEBI" id="CHEBI:57856"/>
        <dbReference type="ChEBI" id="CHEBI:59789"/>
        <dbReference type="ChEBI" id="CHEBI:62729"/>
        <dbReference type="ChEBI" id="CHEBI:62731"/>
        <dbReference type="EC" id="2.1.1.222"/>
    </reaction>
</comment>
<comment type="pathway">
    <text evidence="1">Cofactor biosynthesis; ubiquinone biosynthesis.</text>
</comment>
<comment type="similarity">
    <text evidence="1">Belongs to the methyltransferase superfamily. UbiG/COQ3 family.</text>
</comment>
<reference key="1">
    <citation type="journal article" date="2011" name="J. Bacteriol.">
        <title>Genome of Ochrobactrum anthropi ATCC 49188 T, a versatile opportunistic pathogen and symbiont of several eukaryotic hosts.</title>
        <authorList>
            <person name="Chain P.S."/>
            <person name="Lang D.M."/>
            <person name="Comerci D.J."/>
            <person name="Malfatti S.A."/>
            <person name="Vergez L.M."/>
            <person name="Shin M."/>
            <person name="Ugalde R.A."/>
            <person name="Garcia E."/>
            <person name="Tolmasky M.E."/>
        </authorList>
    </citation>
    <scope>NUCLEOTIDE SEQUENCE [LARGE SCALE GENOMIC DNA]</scope>
    <source>
        <strain>ATCC 49188 / DSM 6882 / CCUG 24695 / JCM 21032 / LMG 3331 / NBRC 15819 / NCTC 12168 / Alc 37</strain>
    </source>
</reference>
<dbReference type="EC" id="2.1.1.222" evidence="1"/>
<dbReference type="EC" id="2.1.1.64" evidence="1"/>
<dbReference type="EMBL" id="CP000758">
    <property type="protein sequence ID" value="ABS13754.1"/>
    <property type="molecule type" value="Genomic_DNA"/>
</dbReference>
<dbReference type="RefSeq" id="WP_012091205.1">
    <property type="nucleotide sequence ID" value="NC_009667.1"/>
</dbReference>
<dbReference type="SMR" id="A6WXQ0"/>
<dbReference type="STRING" id="439375.Oant_1033"/>
<dbReference type="KEGG" id="oan:Oant_1033"/>
<dbReference type="PATRIC" id="fig|439375.7.peg.1083"/>
<dbReference type="eggNOG" id="COG2227">
    <property type="taxonomic scope" value="Bacteria"/>
</dbReference>
<dbReference type="HOGENOM" id="CLU_042432_0_0_5"/>
<dbReference type="PhylomeDB" id="A6WXQ0"/>
<dbReference type="UniPathway" id="UPA00232"/>
<dbReference type="Proteomes" id="UP000002301">
    <property type="component" value="Chromosome 1"/>
</dbReference>
<dbReference type="GO" id="GO:0102208">
    <property type="term" value="F:2-polyprenyl-6-hydroxyphenol methylase activity"/>
    <property type="evidence" value="ECO:0007669"/>
    <property type="project" value="UniProtKB-EC"/>
</dbReference>
<dbReference type="GO" id="GO:0061542">
    <property type="term" value="F:3-demethylubiquinol 3-O-methyltransferase activity"/>
    <property type="evidence" value="ECO:0007669"/>
    <property type="project" value="UniProtKB-UniRule"/>
</dbReference>
<dbReference type="GO" id="GO:0010420">
    <property type="term" value="F:polyprenyldihydroxybenzoate methyltransferase activity"/>
    <property type="evidence" value="ECO:0007669"/>
    <property type="project" value="InterPro"/>
</dbReference>
<dbReference type="GO" id="GO:0032259">
    <property type="term" value="P:methylation"/>
    <property type="evidence" value="ECO:0007669"/>
    <property type="project" value="UniProtKB-KW"/>
</dbReference>
<dbReference type="CDD" id="cd02440">
    <property type="entry name" value="AdoMet_MTases"/>
    <property type="match status" value="1"/>
</dbReference>
<dbReference type="Gene3D" id="3.40.50.150">
    <property type="entry name" value="Vaccinia Virus protein VP39"/>
    <property type="match status" value="1"/>
</dbReference>
<dbReference type="HAMAP" id="MF_00472">
    <property type="entry name" value="UbiG"/>
    <property type="match status" value="1"/>
</dbReference>
<dbReference type="InterPro" id="IPR029063">
    <property type="entry name" value="SAM-dependent_MTases_sf"/>
</dbReference>
<dbReference type="InterPro" id="IPR010233">
    <property type="entry name" value="UbiG_MeTrfase"/>
</dbReference>
<dbReference type="NCBIfam" id="TIGR01983">
    <property type="entry name" value="UbiG"/>
    <property type="match status" value="1"/>
</dbReference>
<dbReference type="PANTHER" id="PTHR43464">
    <property type="entry name" value="METHYLTRANSFERASE"/>
    <property type="match status" value="1"/>
</dbReference>
<dbReference type="PANTHER" id="PTHR43464:SF19">
    <property type="entry name" value="UBIQUINONE BIOSYNTHESIS O-METHYLTRANSFERASE, MITOCHONDRIAL"/>
    <property type="match status" value="1"/>
</dbReference>
<dbReference type="Pfam" id="PF13489">
    <property type="entry name" value="Methyltransf_23"/>
    <property type="match status" value="1"/>
</dbReference>
<dbReference type="SUPFAM" id="SSF53335">
    <property type="entry name" value="S-adenosyl-L-methionine-dependent methyltransferases"/>
    <property type="match status" value="1"/>
</dbReference>
<gene>
    <name evidence="1" type="primary">ubiG</name>
    <name type="ordered locus">Oant_1033</name>
</gene>
<feature type="chain" id="PRO_1000013905" description="Ubiquinone biosynthesis O-methyltransferase">
    <location>
        <begin position="1"/>
        <end position="248"/>
    </location>
</feature>
<feature type="binding site" evidence="1">
    <location>
        <position position="41"/>
    </location>
    <ligand>
        <name>S-adenosyl-L-methionine</name>
        <dbReference type="ChEBI" id="CHEBI:59789"/>
    </ligand>
</feature>
<feature type="binding site" evidence="1">
    <location>
        <position position="72"/>
    </location>
    <ligand>
        <name>S-adenosyl-L-methionine</name>
        <dbReference type="ChEBI" id="CHEBI:59789"/>
    </ligand>
</feature>
<feature type="binding site" evidence="1">
    <location>
        <position position="93"/>
    </location>
    <ligand>
        <name>S-adenosyl-L-methionine</name>
        <dbReference type="ChEBI" id="CHEBI:59789"/>
    </ligand>
</feature>
<feature type="binding site" evidence="1">
    <location>
        <position position="136"/>
    </location>
    <ligand>
        <name>S-adenosyl-L-methionine</name>
        <dbReference type="ChEBI" id="CHEBI:59789"/>
    </ligand>
</feature>